<protein>
    <recommendedName>
        <fullName evidence="1">Alanine--tRNA ligase</fullName>
        <ecNumber evidence="1">6.1.1.7</ecNumber>
    </recommendedName>
    <alternativeName>
        <fullName evidence="1">Alanyl-tRNA synthetase</fullName>
        <shortName evidence="1">AlaRS</shortName>
    </alternativeName>
</protein>
<sequence>MSKSTAEIRQAFLDFFHSKGHQVVASSSLVPNNDPTLLFTNAGMNQFKDVFLGLDKRNYSRATTSQRCVRAGGKHNDLENVGYTARHHTFFEMLGNFSFGDYFKHDAIQFAWELLTGENWFALPKDRLWVTVYETDDEAYEIWEKEVGIPRERIIRIGDNKGAAYASDNFWQMGDTGPCGPCTEIFYDHGDHIWGGPPGSPEEDGDRYIEIWNIVFMQFNRQADGTMEPLPKPSVDTGMGLERIAAVLQHVNSNYEIDLFRTLIEAVAKVTGATDLSNKSLRVIADHIRSCAFLIADGVVPSNENRGYVLRRIIRRAVRHGNMLGAKETFFYKLVGPLIDVMGSAGEELKRQQAQVEQVLKTEEEQFARTLERGLALLDEELAKLSGDTLDGETAFRLYDTYGFPVDLTADVCRERNIKVDEAGFEAAMEEQRRRAREASGFGADYNAMIRVDGASEFKGYDHLELNGKVTALFVDGKAVDAISAGQEAVVVLDQTPFYAESGGQVGDKGELKGAGFAFAVSDTQKYGQAIGHIGTLSTGSLKVGDAVQADVDDARRARIRLNHSATHLMHAALRQILGTHVAQKGSLVNDKVLRFDFSHNEAMKPSEIRAVEDLVNAQIRRNLPVETNIMDLEAAKAKGAMALFGEKYDDRVRVLSMGDFSTELCGGTHASRTGDIGLFRIVSESGTAAGVRRIEAVTGEGAIATLHAESDRLSDIAQLLKGDSQNLGEKVRSVLERTRQLEKELQQLKEQAAAQESANLSSKAVDINGVKLLVSELAGVEPKMLRTMVDDLKNQLGSTVIVLATVAEGKVSLIAGVSKDVTDRVKAGELVGMVAQQVGGKGGGRPDMAQAGGTDAAALPAALASVKGWVSAKL</sequence>
<evidence type="ECO:0000255" key="1">
    <source>
        <dbReference type="HAMAP-Rule" id="MF_00036"/>
    </source>
</evidence>
<name>SYA_CITK8</name>
<proteinExistence type="inferred from homology"/>
<reference key="1">
    <citation type="submission" date="2007-08" db="EMBL/GenBank/DDBJ databases">
        <authorList>
            <consortium name="The Citrobacter koseri Genome Sequencing Project"/>
            <person name="McClelland M."/>
            <person name="Sanderson E.K."/>
            <person name="Porwollik S."/>
            <person name="Spieth J."/>
            <person name="Clifton W.S."/>
            <person name="Latreille P."/>
            <person name="Courtney L."/>
            <person name="Wang C."/>
            <person name="Pepin K."/>
            <person name="Bhonagiri V."/>
            <person name="Nash W."/>
            <person name="Johnson M."/>
            <person name="Thiruvilangam P."/>
            <person name="Wilson R."/>
        </authorList>
    </citation>
    <scope>NUCLEOTIDE SEQUENCE [LARGE SCALE GENOMIC DNA]</scope>
    <source>
        <strain>ATCC BAA-895 / CDC 4225-83 / SGSC4696</strain>
    </source>
</reference>
<gene>
    <name evidence="1" type="primary">alaS</name>
    <name type="ordered locus">CKO_04048</name>
</gene>
<accession>A8ANQ1</accession>
<dbReference type="EC" id="6.1.1.7" evidence="1"/>
<dbReference type="EMBL" id="CP000822">
    <property type="protein sequence ID" value="ABV15114.1"/>
    <property type="molecule type" value="Genomic_DNA"/>
</dbReference>
<dbReference type="RefSeq" id="WP_012134804.1">
    <property type="nucleotide sequence ID" value="NC_009792.1"/>
</dbReference>
<dbReference type="SMR" id="A8ANQ1"/>
<dbReference type="STRING" id="290338.CKO_04048"/>
<dbReference type="GeneID" id="45137690"/>
<dbReference type="KEGG" id="cko:CKO_04048"/>
<dbReference type="HOGENOM" id="CLU_004485_1_1_6"/>
<dbReference type="OrthoDB" id="9803884at2"/>
<dbReference type="Proteomes" id="UP000008148">
    <property type="component" value="Chromosome"/>
</dbReference>
<dbReference type="GO" id="GO:0005829">
    <property type="term" value="C:cytosol"/>
    <property type="evidence" value="ECO:0007669"/>
    <property type="project" value="TreeGrafter"/>
</dbReference>
<dbReference type="GO" id="GO:0004813">
    <property type="term" value="F:alanine-tRNA ligase activity"/>
    <property type="evidence" value="ECO:0007669"/>
    <property type="project" value="UniProtKB-UniRule"/>
</dbReference>
<dbReference type="GO" id="GO:0002161">
    <property type="term" value="F:aminoacyl-tRNA deacylase activity"/>
    <property type="evidence" value="ECO:0007669"/>
    <property type="project" value="TreeGrafter"/>
</dbReference>
<dbReference type="GO" id="GO:0005524">
    <property type="term" value="F:ATP binding"/>
    <property type="evidence" value="ECO:0007669"/>
    <property type="project" value="UniProtKB-UniRule"/>
</dbReference>
<dbReference type="GO" id="GO:0000049">
    <property type="term" value="F:tRNA binding"/>
    <property type="evidence" value="ECO:0007669"/>
    <property type="project" value="UniProtKB-KW"/>
</dbReference>
<dbReference type="GO" id="GO:0008270">
    <property type="term" value="F:zinc ion binding"/>
    <property type="evidence" value="ECO:0007669"/>
    <property type="project" value="UniProtKB-UniRule"/>
</dbReference>
<dbReference type="GO" id="GO:0006419">
    <property type="term" value="P:alanyl-tRNA aminoacylation"/>
    <property type="evidence" value="ECO:0007669"/>
    <property type="project" value="UniProtKB-UniRule"/>
</dbReference>
<dbReference type="GO" id="GO:0045892">
    <property type="term" value="P:negative regulation of DNA-templated transcription"/>
    <property type="evidence" value="ECO:0007669"/>
    <property type="project" value="TreeGrafter"/>
</dbReference>
<dbReference type="CDD" id="cd00673">
    <property type="entry name" value="AlaRS_core"/>
    <property type="match status" value="1"/>
</dbReference>
<dbReference type="FunFam" id="2.40.30.130:FF:000001">
    <property type="entry name" value="Alanine--tRNA ligase"/>
    <property type="match status" value="1"/>
</dbReference>
<dbReference type="FunFam" id="3.10.310.40:FF:000001">
    <property type="entry name" value="Alanine--tRNA ligase"/>
    <property type="match status" value="1"/>
</dbReference>
<dbReference type="FunFam" id="3.30.54.20:FF:000001">
    <property type="entry name" value="Alanine--tRNA ligase"/>
    <property type="match status" value="1"/>
</dbReference>
<dbReference type="FunFam" id="3.30.930.10:FF:000004">
    <property type="entry name" value="Alanine--tRNA ligase"/>
    <property type="match status" value="1"/>
</dbReference>
<dbReference type="FunFam" id="3.30.980.10:FF:000004">
    <property type="entry name" value="Alanine--tRNA ligase, cytoplasmic"/>
    <property type="match status" value="1"/>
</dbReference>
<dbReference type="Gene3D" id="2.40.30.130">
    <property type="match status" value="1"/>
</dbReference>
<dbReference type="Gene3D" id="3.10.310.40">
    <property type="match status" value="1"/>
</dbReference>
<dbReference type="Gene3D" id="3.30.54.20">
    <property type="match status" value="1"/>
</dbReference>
<dbReference type="Gene3D" id="6.10.250.550">
    <property type="match status" value="1"/>
</dbReference>
<dbReference type="Gene3D" id="3.30.930.10">
    <property type="entry name" value="Bira Bifunctional Protein, Domain 2"/>
    <property type="match status" value="1"/>
</dbReference>
<dbReference type="Gene3D" id="3.30.980.10">
    <property type="entry name" value="Threonyl-trna Synthetase, Chain A, domain 2"/>
    <property type="match status" value="1"/>
</dbReference>
<dbReference type="HAMAP" id="MF_00036_B">
    <property type="entry name" value="Ala_tRNA_synth_B"/>
    <property type="match status" value="1"/>
</dbReference>
<dbReference type="InterPro" id="IPR045864">
    <property type="entry name" value="aa-tRNA-synth_II/BPL/LPL"/>
</dbReference>
<dbReference type="InterPro" id="IPR002318">
    <property type="entry name" value="Ala-tRNA-lgiase_IIc"/>
</dbReference>
<dbReference type="InterPro" id="IPR018162">
    <property type="entry name" value="Ala-tRNA-ligase_IIc_anticod-bd"/>
</dbReference>
<dbReference type="InterPro" id="IPR018165">
    <property type="entry name" value="Ala-tRNA-synth_IIc_core"/>
</dbReference>
<dbReference type="InterPro" id="IPR018164">
    <property type="entry name" value="Ala-tRNA-synth_IIc_N"/>
</dbReference>
<dbReference type="InterPro" id="IPR050058">
    <property type="entry name" value="Ala-tRNA_ligase"/>
</dbReference>
<dbReference type="InterPro" id="IPR023033">
    <property type="entry name" value="Ala_tRNA_ligase_euk/bac"/>
</dbReference>
<dbReference type="InterPro" id="IPR003156">
    <property type="entry name" value="DHHA1_dom"/>
</dbReference>
<dbReference type="InterPro" id="IPR018163">
    <property type="entry name" value="Thr/Ala-tRNA-synth_IIc_edit"/>
</dbReference>
<dbReference type="InterPro" id="IPR009000">
    <property type="entry name" value="Transl_B-barrel_sf"/>
</dbReference>
<dbReference type="InterPro" id="IPR012947">
    <property type="entry name" value="tRNA_SAD"/>
</dbReference>
<dbReference type="NCBIfam" id="TIGR00344">
    <property type="entry name" value="alaS"/>
    <property type="match status" value="1"/>
</dbReference>
<dbReference type="PANTHER" id="PTHR11777:SF9">
    <property type="entry name" value="ALANINE--TRNA LIGASE, CYTOPLASMIC"/>
    <property type="match status" value="1"/>
</dbReference>
<dbReference type="PANTHER" id="PTHR11777">
    <property type="entry name" value="ALANYL-TRNA SYNTHETASE"/>
    <property type="match status" value="1"/>
</dbReference>
<dbReference type="Pfam" id="PF02272">
    <property type="entry name" value="DHHA1"/>
    <property type="match status" value="1"/>
</dbReference>
<dbReference type="Pfam" id="PF01411">
    <property type="entry name" value="tRNA-synt_2c"/>
    <property type="match status" value="1"/>
</dbReference>
<dbReference type="Pfam" id="PF07973">
    <property type="entry name" value="tRNA_SAD"/>
    <property type="match status" value="1"/>
</dbReference>
<dbReference type="PRINTS" id="PR00980">
    <property type="entry name" value="TRNASYNTHALA"/>
</dbReference>
<dbReference type="SMART" id="SM00863">
    <property type="entry name" value="tRNA_SAD"/>
    <property type="match status" value="1"/>
</dbReference>
<dbReference type="SUPFAM" id="SSF55681">
    <property type="entry name" value="Class II aaRS and biotin synthetases"/>
    <property type="match status" value="1"/>
</dbReference>
<dbReference type="SUPFAM" id="SSF101353">
    <property type="entry name" value="Putative anticodon-binding domain of alanyl-tRNA synthetase (AlaRS)"/>
    <property type="match status" value="1"/>
</dbReference>
<dbReference type="SUPFAM" id="SSF55186">
    <property type="entry name" value="ThrRS/AlaRS common domain"/>
    <property type="match status" value="1"/>
</dbReference>
<dbReference type="SUPFAM" id="SSF50447">
    <property type="entry name" value="Translation proteins"/>
    <property type="match status" value="1"/>
</dbReference>
<dbReference type="PROSITE" id="PS50860">
    <property type="entry name" value="AA_TRNA_LIGASE_II_ALA"/>
    <property type="match status" value="1"/>
</dbReference>
<comment type="function">
    <text evidence="1">Catalyzes the attachment of alanine to tRNA(Ala) in a two-step reaction: alanine is first activated by ATP to form Ala-AMP and then transferred to the acceptor end of tRNA(Ala). Also edits incorrectly charged Ser-tRNA(Ala) and Gly-tRNA(Ala) via its editing domain.</text>
</comment>
<comment type="catalytic activity">
    <reaction evidence="1">
        <text>tRNA(Ala) + L-alanine + ATP = L-alanyl-tRNA(Ala) + AMP + diphosphate</text>
        <dbReference type="Rhea" id="RHEA:12540"/>
        <dbReference type="Rhea" id="RHEA-COMP:9657"/>
        <dbReference type="Rhea" id="RHEA-COMP:9923"/>
        <dbReference type="ChEBI" id="CHEBI:30616"/>
        <dbReference type="ChEBI" id="CHEBI:33019"/>
        <dbReference type="ChEBI" id="CHEBI:57972"/>
        <dbReference type="ChEBI" id="CHEBI:78442"/>
        <dbReference type="ChEBI" id="CHEBI:78497"/>
        <dbReference type="ChEBI" id="CHEBI:456215"/>
        <dbReference type="EC" id="6.1.1.7"/>
    </reaction>
</comment>
<comment type="cofactor">
    <cofactor evidence="1">
        <name>Zn(2+)</name>
        <dbReference type="ChEBI" id="CHEBI:29105"/>
    </cofactor>
    <text evidence="1">Binds 1 zinc ion per subunit.</text>
</comment>
<comment type="subunit">
    <text evidence="1">Homotetramer.</text>
</comment>
<comment type="subcellular location">
    <subcellularLocation>
        <location evidence="1">Cytoplasm</location>
    </subcellularLocation>
</comment>
<comment type="domain">
    <text evidence="1">Consists of three domains; the N-terminal catalytic domain, the editing domain and the C-terminal C-Ala domain. The editing domain removes incorrectly charged amino acids, while the C-Ala domain, along with tRNA(Ala), serves as a bridge to cooperatively bring together the editing and aminoacylation centers thus stimulating deacylation of misacylated tRNAs.</text>
</comment>
<comment type="similarity">
    <text evidence="1">Belongs to the class-II aminoacyl-tRNA synthetase family.</text>
</comment>
<organism>
    <name type="scientific">Citrobacter koseri (strain ATCC BAA-895 / CDC 4225-83 / SGSC4696)</name>
    <dbReference type="NCBI Taxonomy" id="290338"/>
    <lineage>
        <taxon>Bacteria</taxon>
        <taxon>Pseudomonadati</taxon>
        <taxon>Pseudomonadota</taxon>
        <taxon>Gammaproteobacteria</taxon>
        <taxon>Enterobacterales</taxon>
        <taxon>Enterobacteriaceae</taxon>
        <taxon>Citrobacter</taxon>
    </lineage>
</organism>
<keyword id="KW-0030">Aminoacyl-tRNA synthetase</keyword>
<keyword id="KW-0067">ATP-binding</keyword>
<keyword id="KW-0963">Cytoplasm</keyword>
<keyword id="KW-0436">Ligase</keyword>
<keyword id="KW-0479">Metal-binding</keyword>
<keyword id="KW-0547">Nucleotide-binding</keyword>
<keyword id="KW-0648">Protein biosynthesis</keyword>
<keyword id="KW-1185">Reference proteome</keyword>
<keyword id="KW-0694">RNA-binding</keyword>
<keyword id="KW-0820">tRNA-binding</keyword>
<keyword id="KW-0862">Zinc</keyword>
<feature type="chain" id="PRO_0000347555" description="Alanine--tRNA ligase">
    <location>
        <begin position="1"/>
        <end position="875"/>
    </location>
</feature>
<feature type="binding site" evidence="1">
    <location>
        <position position="564"/>
    </location>
    <ligand>
        <name>Zn(2+)</name>
        <dbReference type="ChEBI" id="CHEBI:29105"/>
    </ligand>
</feature>
<feature type="binding site" evidence="1">
    <location>
        <position position="568"/>
    </location>
    <ligand>
        <name>Zn(2+)</name>
        <dbReference type="ChEBI" id="CHEBI:29105"/>
    </ligand>
</feature>
<feature type="binding site" evidence="1">
    <location>
        <position position="666"/>
    </location>
    <ligand>
        <name>Zn(2+)</name>
        <dbReference type="ChEBI" id="CHEBI:29105"/>
    </ligand>
</feature>
<feature type="binding site" evidence="1">
    <location>
        <position position="670"/>
    </location>
    <ligand>
        <name>Zn(2+)</name>
        <dbReference type="ChEBI" id="CHEBI:29105"/>
    </ligand>
</feature>